<sequence length="500" mass="55674">MGARASVLSGGKLDAWEKIRLRPGGKKKYRLKHLVWASRELERFALNPGLLETPEGCLQIIEQIQPAIKTGTEELKSLFNLVAVLYCVHRKIDVKDTKEALDKIEEIQNKSQQKTQQAAADKEKDNKVSQNYPIVQNAQGQMVHQAISPRTLNAWVKVVEEKAFSPEVIPMFSALSEGATPQDLNAMLNTVGGHQAAMQMLKDTINEEAAEWDRVHPVHAGPIPPGQMREPRGSDIAGTTSTLQEQIAWMTGNPAIPVGDIYKRWIILGLNKIVRMYSPVSILDIKQGPKEPFRDYVDRFFKTLRAEQATQDVKNWMTETLLVQNANPDCKTILRALGQGASIEEMMTACQGVGGPSHKARVLAEAMSQVTNTNTAIMMQKGNFKGQRKFVKCFNCGKEGHIARNCRAPRKKGCWKCGREGHQMKDCTERQANFLGKIWPSSKGRPGNFLQSRPEPTAPPAESFGFGEEMTPSPKQEQLKDKEPPLASLRSLFGSDPLLQ</sequence>
<proteinExistence type="inferred from homology"/>
<evidence type="ECO:0000250" key="1"/>
<evidence type="ECO:0000250" key="2">
    <source>
        <dbReference type="UniProtKB" id="P03347"/>
    </source>
</evidence>
<evidence type="ECO:0000250" key="3">
    <source>
        <dbReference type="UniProtKB" id="P03348"/>
    </source>
</evidence>
<evidence type="ECO:0000250" key="4">
    <source>
        <dbReference type="UniProtKB" id="P03349"/>
    </source>
</evidence>
<evidence type="ECO:0000250" key="5">
    <source>
        <dbReference type="UniProtKB" id="P04591"/>
    </source>
</evidence>
<evidence type="ECO:0000250" key="6">
    <source>
        <dbReference type="UniProtKB" id="P12493"/>
    </source>
</evidence>
<evidence type="ECO:0000250" key="7">
    <source>
        <dbReference type="UniProtKB" id="P12497"/>
    </source>
</evidence>
<evidence type="ECO:0000255" key="8">
    <source>
        <dbReference type="PROSITE-ProRule" id="PRU00047"/>
    </source>
</evidence>
<evidence type="ECO:0000256" key="9">
    <source>
        <dbReference type="SAM" id="MobiDB-lite"/>
    </source>
</evidence>
<evidence type="ECO:0000305" key="10"/>
<reference key="1">
    <citation type="journal article" date="1998" name="J. Virol.">
        <title>A comprehensive panel of near-full-length clones and reference sequences for non-subtype B isolates of human immunodeficiency virus type 1.</title>
        <authorList>
            <person name="Gao F."/>
            <person name="Robertson D.L."/>
            <person name="Carruthers C.D."/>
            <person name="Morrison S.G."/>
            <person name="Jian B."/>
            <person name="Chen Y."/>
            <person name="Barre-Sinoussi F."/>
            <person name="Girard M."/>
            <person name="Srinivasan A."/>
            <person name="Abimiku A.G."/>
            <person name="Shaw G.M."/>
            <person name="Sharp P.M."/>
            <person name="Hahn B.H."/>
        </authorList>
    </citation>
    <scope>NUCLEOTIDE SEQUENCE [GENOMIC DNA]</scope>
</reference>
<keyword id="KW-0014">AIDS</keyword>
<keyword id="KW-0167">Capsid protein</keyword>
<keyword id="KW-1032">Host cell membrane</keyword>
<keyword id="KW-1035">Host cytoplasm</keyword>
<keyword id="KW-1039">Host endosome</keyword>
<keyword id="KW-1043">Host membrane</keyword>
<keyword id="KW-1048">Host nucleus</keyword>
<keyword id="KW-0945">Host-virus interaction</keyword>
<keyword id="KW-0449">Lipoprotein</keyword>
<keyword id="KW-0472">Membrane</keyword>
<keyword id="KW-0479">Metal-binding</keyword>
<keyword id="KW-0488">Methylation</keyword>
<keyword id="KW-0519">Myristate</keyword>
<keyword id="KW-0597">Phosphoprotein</keyword>
<keyword id="KW-1185">Reference proteome</keyword>
<keyword id="KW-0677">Repeat</keyword>
<keyword id="KW-0688">Ribosomal frameshifting</keyword>
<keyword id="KW-0694">RNA-binding</keyword>
<keyword id="KW-1198">Viral budding</keyword>
<keyword id="KW-1187">Viral budding via the host ESCRT complexes</keyword>
<keyword id="KW-0543">Viral nucleoprotein</keyword>
<keyword id="KW-1188">Viral release from host cell</keyword>
<keyword id="KW-0946">Virion</keyword>
<keyword id="KW-0862">Zinc</keyword>
<keyword id="KW-0863">Zinc-finger</keyword>
<protein>
    <recommendedName>
        <fullName>Gag polyprotein</fullName>
    </recommendedName>
    <alternativeName>
        <fullName>Pr55Gag</fullName>
    </alternativeName>
    <component>
        <recommendedName>
            <fullName>Matrix protein p17</fullName>
            <shortName>MA</shortName>
        </recommendedName>
    </component>
    <component>
        <recommendedName>
            <fullName>Capsid protein p24</fullName>
            <shortName>CA</shortName>
        </recommendedName>
    </component>
    <component>
        <recommendedName>
            <fullName evidence="6">Spacer peptide 1</fullName>
            <shortName>SP1</shortName>
        </recommendedName>
        <alternativeName>
            <fullName>p2</fullName>
        </alternativeName>
    </component>
    <component>
        <recommendedName>
            <fullName>Nucleocapsid protein p7</fullName>
            <shortName>NC</shortName>
        </recommendedName>
    </component>
    <component>
        <recommendedName>
            <fullName evidence="6">Spacer peptide 2</fullName>
            <shortName>SP2</shortName>
        </recommendedName>
        <alternativeName>
            <fullName>p1</fullName>
        </alternativeName>
    </component>
    <component>
        <recommendedName>
            <fullName>p6-gag</fullName>
        </recommendedName>
    </component>
</protein>
<organismHost>
    <name type="scientific">Homo sapiens</name>
    <name type="common">Human</name>
    <dbReference type="NCBI Taxonomy" id="9606"/>
</organismHost>
<accession>O93182</accession>
<comment type="function">
    <molecule>Gag polyprotein</molecule>
    <text evidence="5">Mediates, with Gag-Pol polyprotein, the essential events in virion assembly, including binding the plasma membrane, making the protein-protein interactions necessary to create spherical particles, recruiting the viral Env proteins, and packaging the genomic RNA via direct interactions with the RNA packaging sequence (Psi).</text>
</comment>
<comment type="function">
    <molecule>Matrix protein p17</molecule>
    <text evidence="1 6">Targets the polyprotein to the plasma membrane via a multipartite membrane-binding signal, that includes its myristoylated N-terminus (By similarity). Matrix protein is part of the pre-integration complex. Implicated in the release from host cell mediated by Vpu. Binds to RNA (By similarity).</text>
</comment>
<comment type="function">
    <molecule>Capsid protein p24</molecule>
    <text evidence="5 6">Forms the conical core that encapsulates the genomic RNA-nucleocapsid complex in the virion. Most core are conical, with only 7% tubular. The core is constituted by capsid protein hexamer subunits. The core is disassembled soon after virion entry (By similarity). The capsid promotes immune invasion by cloaking viral DNA from CGAS detection (By similarity). Host restriction factors such as TRIM5-alpha or TRIMCyp bind retroviral capsids and cause premature capsid disassembly, leading to blocks in reverse transcription. Capsid restriction by TRIM5 is one of the factors which restricts HIV-1 to the human species. Host PIN1 apparently facilitates the virion uncoating (By similarity). On the other hand, interactions with PDZD8 or CYPA stabilize the capsid (By similarity).</text>
</comment>
<comment type="function">
    <molecule>Nucleocapsid protein p7</molecule>
    <text evidence="5">Encapsulates and protects viral dimeric unspliced genomic RNA (gRNA). Binds these RNAs through its zinc fingers. Acts as a nucleic acid chaperone which is involved in rearangement of nucleic acid secondary structure during gRNA retrotranscription. Also facilitates template switch leading to recombination. As part of the polyprotein, participates in gRNA dimerization, packaging, tRNA incorporation and virion assembly.</text>
</comment>
<comment type="function">
    <molecule>p6-gag</molecule>
    <text evidence="6">Plays a role in budding of the assembled particle by interacting with the host class E VPS proteins TSG101 and PDCD6IP/AIP1.</text>
</comment>
<comment type="subunit">
    <molecule>Gag polyprotein</molecule>
    <text evidence="4 5">Homotrimer; further assembles as hexamers of trimers. Oligomerization possibly creates a central hole into which the cytoplasmic tail of the gp41 envelope protein may be inserted. Interacts with host TRIM22; this interaction seems to disrupt proper trafficking of Gag polyprotein and may interfere with budding. Interacts with host PDZD8. When ubiquitinated, interacts (via p6-gag domain) with host PACSIN2; this interaction allows PACSIN2 recruitment to viral assembly sites and its subsequent incorporation into virions. Interacts with MOV10 (By similarity).</text>
</comment>
<comment type="subunit">
    <molecule>Matrix protein p17</molecule>
    <text evidence="5 6">Homotrimer; further assembles as hexamers of trimers. Interacts with gp41 (via C-terminus). Interacts with host CALM1; this interaction induces a conformational change in the Matrix protein, triggering exposure of the myristate group. Interacts with host AP3D1; this interaction allows the polyprotein trafficking to multivesicular bodies during virus assembly. Part of the pre-integration complex (PIC) which is composed of viral genome, matrix protein, Vpr and integrase.</text>
</comment>
<comment type="subunit">
    <molecule>Capsid protein p24</molecule>
    <text evidence="5 6">Homodimer; the homodimer further multimerizes as homohexamers or homopentamers (By similarity). Interacts with host NUP98 (By similarity). Interacts with host PPIA/CYPA; this interaction stabilizes the capsid (By similarity). Interacts with host NUP153 (By similarity). Interacts with host PDZD8; this interaction stabilizes the capsid. Interacts with host TRIM5; this interaction destabilizes the capsid (By similarity). Interacts with host CPSF6 (By similarity). Interacts with host NONO; the interaction is weak (By similarity).</text>
</comment>
<comment type="subunit">
    <molecule>Nucleocapsid protein p7</molecule>
    <text evidence="6">Interacts with host NUP98.</text>
</comment>
<comment type="subunit">
    <molecule>p6-gag</molecule>
    <text evidence="3 6">Interacts with Vpr; this interaction allows Vpr incorporation into the virion. Interacts with host TSG101. p6-gag interacts with host PDCD6IP/AIP1.</text>
</comment>
<comment type="subcellular location">
    <molecule>Gag polyprotein</molecule>
    <subcellularLocation>
        <location evidence="6">Host cell membrane</location>
        <topology evidence="6">Lipid-anchor</topology>
    </subcellularLocation>
    <subcellularLocation>
        <location evidence="6">Host endosome</location>
        <location evidence="6">Host multivesicular body</location>
    </subcellularLocation>
    <text evidence="6">These locations are probably linked to virus assembly sites. The main location is the cell membrane, but under some circumstances, late endosomal compartments can serve as productive sites for virion assembly.</text>
</comment>
<comment type="subcellular location">
    <molecule>Matrix protein p17</molecule>
    <subcellularLocation>
        <location evidence="6">Virion membrane</location>
        <topology evidence="6">Lipid-anchor</topology>
    </subcellularLocation>
    <subcellularLocation>
        <location evidence="1">Host nucleus</location>
    </subcellularLocation>
    <subcellularLocation>
        <location evidence="1">Host cytoplasm</location>
    </subcellularLocation>
</comment>
<comment type="subcellular location">
    <molecule>Capsid protein p24</molecule>
    <subcellularLocation>
        <location evidence="6">Virion</location>
    </subcellularLocation>
</comment>
<comment type="subcellular location">
    <molecule>Nucleocapsid protein p7</molecule>
    <subcellularLocation>
        <location evidence="6">Virion</location>
    </subcellularLocation>
</comment>
<comment type="alternative products">
    <event type="ribosomal frameshifting"/>
    <isoform>
        <id>O93182-1</id>
        <name>Gag polyprotein</name>
        <sequence type="displayed"/>
    </isoform>
    <isoform>
        <id>O93215-1</id>
        <name>Gag-Pol polyprotein</name>
        <sequence type="external"/>
    </isoform>
    <text>Translation results in the formation of the Gag polyprotein most of the time. Ribosomal frameshifting at the gag-pol genes boundary occurs at low frequency and produces the Gag-Pol polyprotein. This strategy of translation probably allows the virus to modulate the quantity of each viral protein. Maintenance of a correct Gag to Gag-Pol ratio is essential for RNA dimerization and viral infectivity.</text>
</comment>
<comment type="domain">
    <text evidence="6">Late-budding domains (L domains) are short sequence motifs essential for viral particle budding. They recruit proteins of the host ESCRT machinery (Endosomal Sorting Complex Required for Transport) or ESCRT-associated proteins. p6-gag contains two L domains: a PTAP/PSAP motif, which interacts with the UEV domain of TSG101 and a LYPX(n)L motif which interacts with PDCD6IP/AIP1.</text>
</comment>
<comment type="PTM">
    <text evidence="6">Gag-Pol polyprotein: Specific enzymatic cleavages by the viral protease yield mature proteins.</text>
</comment>
<comment type="PTM">
    <molecule>Matrix protein p17</molecule>
    <text evidence="5">Tyrosine phosphorylated presumably in the virion by a host kinase. Phosphorylation is apparently not a major regulator of membrane association.</text>
</comment>
<comment type="PTM">
    <text evidence="6">Capsid protein p24 is phosphorylated possibly by host MAPK1; this phosphorylation is necessary for Pin1-mediated virion uncoating.</text>
</comment>
<comment type="PTM">
    <text evidence="2">Nucleocapsid protein p7 is methylated by host PRMT6, impairing its function by reducing RNA annealing and the initiation of reverse transcription.</text>
</comment>
<comment type="miscellaneous">
    <text>HIV-1 lineages are divided in three main groups, M (for Major), O (for Outlier), and N (for New, or Non-M, Non-O). The vast majority of strains found worldwide belong to the group M. Group O seems to be endemic to and largely confined to Cameroon and neighboring countries in West Central Africa, where these viruses represent a small minority of HIV-1 strains. The group N is represented by a limited number of isolates from Cameroonian persons. The group M is further subdivided in 9 clades or subtypes (A to D, F to H, J and K).</text>
</comment>
<comment type="miscellaneous">
    <molecule>Isoform Gag polyprotein</molecule>
    <text>Produced by conventional translation.</text>
</comment>
<comment type="similarity">
    <text evidence="10">Belongs to the primate lentivirus group gag polyprotein family.</text>
</comment>
<name>GAG_HV190</name>
<organism>
    <name type="scientific">Human immunodeficiency virus type 1 group M subtype H (isolate 90CF056)</name>
    <name type="common">HIV-1</name>
    <dbReference type="NCBI Taxonomy" id="388826"/>
    <lineage>
        <taxon>Viruses</taxon>
        <taxon>Riboviria</taxon>
        <taxon>Pararnavirae</taxon>
        <taxon>Artverviricota</taxon>
        <taxon>Revtraviricetes</taxon>
        <taxon>Ortervirales</taxon>
        <taxon>Retroviridae</taxon>
        <taxon>Orthoretrovirinae</taxon>
        <taxon>Lentivirus</taxon>
        <taxon>Human immunodeficiency virus type 1</taxon>
    </lineage>
</organism>
<feature type="initiator methionine" description="Removed; by host" evidence="1">
    <location>
        <position position="1"/>
    </location>
</feature>
<feature type="chain" id="PRO_0000261201" description="Gag polyprotein">
    <location>
        <begin position="2"/>
        <end position="500"/>
    </location>
</feature>
<feature type="chain" id="PRO_0000246326" description="Matrix protein p17" evidence="1">
    <location>
        <begin position="2"/>
        <end position="132"/>
    </location>
</feature>
<feature type="chain" id="PRO_0000246327" description="Capsid protein p24" evidence="1">
    <location>
        <begin position="133"/>
        <end position="363"/>
    </location>
</feature>
<feature type="peptide" id="PRO_0000246328" description="Spacer peptide 1" evidence="1">
    <location>
        <begin position="364"/>
        <end position="378"/>
    </location>
</feature>
<feature type="chain" id="PRO_0000246329" description="Nucleocapsid protein p7" evidence="1">
    <location>
        <begin position="379"/>
        <end position="433"/>
    </location>
</feature>
<feature type="peptide" id="PRO_0000246330" description="Spacer peptide 2" evidence="1">
    <location>
        <begin position="434"/>
        <end position="449"/>
    </location>
</feature>
<feature type="chain" id="PRO_0000246331" description="p6-gag" evidence="1">
    <location>
        <begin position="450"/>
        <end position="500"/>
    </location>
</feature>
<feature type="zinc finger region" description="CCHC-type 1" evidence="8">
    <location>
        <begin position="391"/>
        <end position="408"/>
    </location>
</feature>
<feature type="zinc finger region" description="CCHC-type 2" evidence="8">
    <location>
        <begin position="412"/>
        <end position="429"/>
    </location>
</feature>
<feature type="region of interest" description="Interaction with Gp41" evidence="6">
    <location>
        <begin position="7"/>
        <end position="31"/>
    </location>
</feature>
<feature type="region of interest" description="Interaction with host CALM1" evidence="5">
    <location>
        <begin position="8"/>
        <end position="43"/>
    </location>
</feature>
<feature type="region of interest" description="Interaction with host AP3D1" evidence="7">
    <location>
        <begin position="12"/>
        <end position="19"/>
    </location>
</feature>
<feature type="region of interest" description="Interaction with membrane phosphatidylinositol 4,5-bisphosphate and RNA" evidence="6">
    <location>
        <begin position="14"/>
        <end position="33"/>
    </location>
</feature>
<feature type="region of interest" description="Interaction with membrane phosphatidylinositol 4,5-bisphosphate" evidence="6">
    <location>
        <begin position="73"/>
        <end position="77"/>
    </location>
</feature>
<feature type="region of interest" description="Disordered" evidence="9">
    <location>
        <begin position="108"/>
        <end position="127"/>
    </location>
</feature>
<feature type="region of interest" description="Interaction with host PPIA/CYPA and NUP153" evidence="6">
    <location>
        <begin position="189"/>
        <end position="227"/>
    </location>
</feature>
<feature type="region of interest" description="PPIA/CYPA-binding loop" evidence="5">
    <location>
        <begin position="217"/>
        <end position="225"/>
    </location>
</feature>
<feature type="region of interest" description="Dimerization/Multimerization of capsid protein p24" evidence="5">
    <location>
        <begin position="277"/>
        <end position="363"/>
    </location>
</feature>
<feature type="region of interest" description="Disordered" evidence="9">
    <location>
        <begin position="438"/>
        <end position="500"/>
    </location>
</feature>
<feature type="short sequence motif" description="Nuclear export signal" evidence="1">
    <location>
        <begin position="16"/>
        <end position="22"/>
    </location>
</feature>
<feature type="short sequence motif" description="Nuclear localization signal" evidence="1">
    <location>
        <begin position="26"/>
        <end position="32"/>
    </location>
</feature>
<feature type="short sequence motif" description="PTAP/PSAP motif">
    <location>
        <begin position="456"/>
        <end position="459"/>
    </location>
</feature>
<feature type="compositionally biased region" description="Polar residues" evidence="9">
    <location>
        <begin position="109"/>
        <end position="118"/>
    </location>
</feature>
<feature type="site" description="Cleavage; by viral protease" evidence="1">
    <location>
        <begin position="132"/>
        <end position="133"/>
    </location>
</feature>
<feature type="site" description="Cleavage; by viral protease" evidence="1">
    <location>
        <begin position="363"/>
        <end position="364"/>
    </location>
</feature>
<feature type="site" description="Cleavage; by viral protease" evidence="1">
    <location>
        <begin position="378"/>
        <end position="379"/>
    </location>
</feature>
<feature type="site" description="Cleavage; by viral protease" evidence="1">
    <location>
        <begin position="433"/>
        <end position="434"/>
    </location>
</feature>
<feature type="site" description="Cleavage; by viral protease" evidence="1">
    <location>
        <begin position="449"/>
        <end position="450"/>
    </location>
</feature>
<feature type="modified residue" description="Phosphoserine; by host MAPK1" evidence="6">
    <location>
        <position position="148"/>
    </location>
</feature>
<feature type="modified residue" description="Asymmetric dimethylarginine; in Nucleocapsid protein p7; by host PRMT6" evidence="1">
    <location>
        <position position="388"/>
    </location>
</feature>
<feature type="modified residue" description="Asymmetric dimethylarginine; in Nucleocapsid protein p7; by host PRMT6" evidence="1">
    <location>
        <position position="410"/>
    </location>
</feature>
<feature type="lipid moiety-binding region" description="N-myristoyl glycine; by host" evidence="1">
    <location>
        <position position="2"/>
    </location>
</feature>
<dbReference type="EMBL" id="AF005496">
    <property type="protein sequence ID" value="AAD03188.1"/>
    <property type="molecule type" value="Genomic_DNA"/>
</dbReference>
<dbReference type="BMRB" id="O93182"/>
<dbReference type="SMR" id="O93182"/>
<dbReference type="DrugBank" id="DB06039">
    <property type="generic name" value="PA-1050040"/>
</dbReference>
<dbReference type="PRO" id="PR:O93182"/>
<dbReference type="Proteomes" id="UP000007685">
    <property type="component" value="Segment"/>
</dbReference>
<dbReference type="GO" id="GO:0042025">
    <property type="term" value="C:host cell nucleus"/>
    <property type="evidence" value="ECO:0007669"/>
    <property type="project" value="UniProtKB-SubCell"/>
</dbReference>
<dbReference type="GO" id="GO:0020002">
    <property type="term" value="C:host cell plasma membrane"/>
    <property type="evidence" value="ECO:0007669"/>
    <property type="project" value="UniProtKB-SubCell"/>
</dbReference>
<dbReference type="GO" id="GO:0072494">
    <property type="term" value="C:host multivesicular body"/>
    <property type="evidence" value="ECO:0007669"/>
    <property type="project" value="UniProtKB-SubCell"/>
</dbReference>
<dbReference type="GO" id="GO:0016020">
    <property type="term" value="C:membrane"/>
    <property type="evidence" value="ECO:0007669"/>
    <property type="project" value="UniProtKB-KW"/>
</dbReference>
<dbReference type="GO" id="GO:0019013">
    <property type="term" value="C:viral nucleocapsid"/>
    <property type="evidence" value="ECO:0007669"/>
    <property type="project" value="UniProtKB-KW"/>
</dbReference>
<dbReference type="GO" id="GO:0055036">
    <property type="term" value="C:virion membrane"/>
    <property type="evidence" value="ECO:0007669"/>
    <property type="project" value="UniProtKB-SubCell"/>
</dbReference>
<dbReference type="GO" id="GO:0003723">
    <property type="term" value="F:RNA binding"/>
    <property type="evidence" value="ECO:0007669"/>
    <property type="project" value="UniProtKB-KW"/>
</dbReference>
<dbReference type="GO" id="GO:0005198">
    <property type="term" value="F:structural molecule activity"/>
    <property type="evidence" value="ECO:0007669"/>
    <property type="project" value="InterPro"/>
</dbReference>
<dbReference type="GO" id="GO:0008270">
    <property type="term" value="F:zinc ion binding"/>
    <property type="evidence" value="ECO:0007669"/>
    <property type="project" value="UniProtKB-KW"/>
</dbReference>
<dbReference type="GO" id="GO:0039702">
    <property type="term" value="P:viral budding via host ESCRT complex"/>
    <property type="evidence" value="ECO:0007669"/>
    <property type="project" value="UniProtKB-KW"/>
</dbReference>
<dbReference type="GO" id="GO:0075523">
    <property type="term" value="P:viral translational frameshifting"/>
    <property type="evidence" value="ECO:0007669"/>
    <property type="project" value="UniProtKB-KW"/>
</dbReference>
<dbReference type="FunFam" id="1.10.1200.30:FF:000001">
    <property type="entry name" value="Gag polyprotein"/>
    <property type="match status" value="1"/>
</dbReference>
<dbReference type="FunFam" id="1.10.375.10:FF:000001">
    <property type="entry name" value="Gag polyprotein"/>
    <property type="match status" value="1"/>
</dbReference>
<dbReference type="FunFam" id="4.10.60.10:FF:000001">
    <property type="entry name" value="Gag polyprotein"/>
    <property type="match status" value="1"/>
</dbReference>
<dbReference type="Gene3D" id="1.10.1200.30">
    <property type="match status" value="1"/>
</dbReference>
<dbReference type="Gene3D" id="6.10.250.390">
    <property type="match status" value="1"/>
</dbReference>
<dbReference type="Gene3D" id="1.10.375.10">
    <property type="entry name" value="Human Immunodeficiency Virus Type 1 Capsid Protein"/>
    <property type="match status" value="1"/>
</dbReference>
<dbReference type="Gene3D" id="1.10.150.90">
    <property type="entry name" value="Immunodeficiency lentiviruses, gag gene matrix protein p17"/>
    <property type="match status" value="1"/>
</dbReference>
<dbReference type="Gene3D" id="1.20.5.760">
    <property type="entry name" value="Single helix bin"/>
    <property type="match status" value="1"/>
</dbReference>
<dbReference type="Gene3D" id="4.10.60.10">
    <property type="entry name" value="Zinc finger, CCHC-type"/>
    <property type="match status" value="1"/>
</dbReference>
<dbReference type="InterPro" id="IPR045345">
    <property type="entry name" value="Gag_p24_C"/>
</dbReference>
<dbReference type="InterPro" id="IPR014817">
    <property type="entry name" value="Gag_p6"/>
</dbReference>
<dbReference type="InterPro" id="IPR000071">
    <property type="entry name" value="Lentvrl_matrix_N"/>
</dbReference>
<dbReference type="InterPro" id="IPR012344">
    <property type="entry name" value="Matrix_HIV/RSV_N"/>
</dbReference>
<dbReference type="InterPro" id="IPR050195">
    <property type="entry name" value="Primate_lentivir_Gag_pol-like"/>
</dbReference>
<dbReference type="InterPro" id="IPR008916">
    <property type="entry name" value="Retrov_capsid_C"/>
</dbReference>
<dbReference type="InterPro" id="IPR008919">
    <property type="entry name" value="Retrov_capsid_N"/>
</dbReference>
<dbReference type="InterPro" id="IPR010999">
    <property type="entry name" value="Retrovr_matrix"/>
</dbReference>
<dbReference type="InterPro" id="IPR001878">
    <property type="entry name" value="Znf_CCHC"/>
</dbReference>
<dbReference type="InterPro" id="IPR036875">
    <property type="entry name" value="Znf_CCHC_sf"/>
</dbReference>
<dbReference type="PANTHER" id="PTHR40389:SF4">
    <property type="match status" value="1"/>
</dbReference>
<dbReference type="PANTHER" id="PTHR40389">
    <property type="entry name" value="ENDOGENOUS RETROVIRUS GROUP K MEMBER 24 GAG POLYPROTEIN-RELATED"/>
    <property type="match status" value="1"/>
</dbReference>
<dbReference type="Pfam" id="PF00540">
    <property type="entry name" value="Gag_p17"/>
    <property type="match status" value="1"/>
</dbReference>
<dbReference type="Pfam" id="PF00607">
    <property type="entry name" value="Gag_p24"/>
    <property type="match status" value="1"/>
</dbReference>
<dbReference type="Pfam" id="PF19317">
    <property type="entry name" value="Gag_p24_C"/>
    <property type="match status" value="1"/>
</dbReference>
<dbReference type="Pfam" id="PF08705">
    <property type="entry name" value="Gag_p6"/>
    <property type="match status" value="1"/>
</dbReference>
<dbReference type="Pfam" id="PF00098">
    <property type="entry name" value="zf-CCHC"/>
    <property type="match status" value="2"/>
</dbReference>
<dbReference type="PRINTS" id="PR00234">
    <property type="entry name" value="HIV1MATRIX"/>
</dbReference>
<dbReference type="SMART" id="SM00343">
    <property type="entry name" value="ZnF_C2HC"/>
    <property type="match status" value="2"/>
</dbReference>
<dbReference type="SUPFAM" id="SSF47836">
    <property type="entry name" value="Retroviral matrix proteins"/>
    <property type="match status" value="1"/>
</dbReference>
<dbReference type="SUPFAM" id="SSF47353">
    <property type="entry name" value="Retrovirus capsid dimerization domain-like"/>
    <property type="match status" value="1"/>
</dbReference>
<dbReference type="SUPFAM" id="SSF47943">
    <property type="entry name" value="Retrovirus capsid protein, N-terminal core domain"/>
    <property type="match status" value="1"/>
</dbReference>
<dbReference type="SUPFAM" id="SSF57756">
    <property type="entry name" value="Retrovirus zinc finger-like domains"/>
    <property type="match status" value="1"/>
</dbReference>
<dbReference type="PROSITE" id="PS50158">
    <property type="entry name" value="ZF_CCHC"/>
    <property type="match status" value="2"/>
</dbReference>
<gene>
    <name type="primary">gag</name>
</gene>